<organism>
    <name type="scientific">Nitrosococcus oceani (strain ATCC 19707 / BCRC 17464 / JCM 30415 / NCIMB 11848 / C-107)</name>
    <dbReference type="NCBI Taxonomy" id="323261"/>
    <lineage>
        <taxon>Bacteria</taxon>
        <taxon>Pseudomonadati</taxon>
        <taxon>Pseudomonadota</taxon>
        <taxon>Gammaproteobacteria</taxon>
        <taxon>Chromatiales</taxon>
        <taxon>Chromatiaceae</taxon>
        <taxon>Nitrosococcus</taxon>
    </lineage>
</organism>
<evidence type="ECO:0000255" key="1">
    <source>
        <dbReference type="HAMAP-Rule" id="MF_00182"/>
    </source>
</evidence>
<proteinExistence type="inferred from homology"/>
<name>FMT_NITOC</name>
<feature type="chain" id="PRO_1000203868" description="Methionyl-tRNA formyltransferase">
    <location>
        <begin position="1"/>
        <end position="323"/>
    </location>
</feature>
<feature type="binding site" evidence="1">
    <location>
        <begin position="113"/>
        <end position="116"/>
    </location>
    <ligand>
        <name>(6S)-5,6,7,8-tetrahydrofolate</name>
        <dbReference type="ChEBI" id="CHEBI:57453"/>
    </ligand>
</feature>
<protein>
    <recommendedName>
        <fullName evidence="1">Methionyl-tRNA formyltransferase</fullName>
        <ecNumber evidence="1">2.1.2.9</ecNumber>
    </recommendedName>
</protein>
<accession>Q3J6T9</accession>
<sequence>MAAPPHILFAGTPVFAAIILRRLLEAKYHIGAVYTQPDRPSGRGRRPTPSPVKDIAITHQLPLYQPATLKDKGSQAQLAALAPDLMVVAAYGLILPATVLQIPPLGCINVHASLLPRWRGAAPIQRALLAGDKVTGISIMQMDAGLDTGPVVHTARYPIHPKDTAATVHDQLAELGAEALLQCLPSLLEKKANIATLQDESQACYAPKIRKEEAWLDWSQPAVLLERQVRAFNPWPVAQTQIGGKTLRVWSAAALAQTANALPGTLLAVHKTGIDVATGNGTLRLLEVQLAGKRVMTVQDYLNAHTLTPGIVLVKNPGKAKSP</sequence>
<keyword id="KW-0648">Protein biosynthesis</keyword>
<keyword id="KW-1185">Reference proteome</keyword>
<keyword id="KW-0808">Transferase</keyword>
<gene>
    <name evidence="1" type="primary">fmt</name>
    <name type="ordered locus">Noc_3015</name>
</gene>
<comment type="function">
    <text evidence="1">Attaches a formyl group to the free amino group of methionyl-tRNA(fMet). The formyl group appears to play a dual role in the initiator identity of N-formylmethionyl-tRNA by promoting its recognition by IF2 and preventing the misappropriation of this tRNA by the elongation apparatus.</text>
</comment>
<comment type="catalytic activity">
    <reaction evidence="1">
        <text>L-methionyl-tRNA(fMet) + (6R)-10-formyltetrahydrofolate = N-formyl-L-methionyl-tRNA(fMet) + (6S)-5,6,7,8-tetrahydrofolate + H(+)</text>
        <dbReference type="Rhea" id="RHEA:24380"/>
        <dbReference type="Rhea" id="RHEA-COMP:9952"/>
        <dbReference type="Rhea" id="RHEA-COMP:9953"/>
        <dbReference type="ChEBI" id="CHEBI:15378"/>
        <dbReference type="ChEBI" id="CHEBI:57453"/>
        <dbReference type="ChEBI" id="CHEBI:78530"/>
        <dbReference type="ChEBI" id="CHEBI:78844"/>
        <dbReference type="ChEBI" id="CHEBI:195366"/>
        <dbReference type="EC" id="2.1.2.9"/>
    </reaction>
</comment>
<comment type="similarity">
    <text evidence="1">Belongs to the Fmt family.</text>
</comment>
<reference key="1">
    <citation type="journal article" date="2006" name="Appl. Environ. Microbiol.">
        <title>Complete genome sequence of the marine, chemolithoautotrophic, ammonia-oxidizing bacterium Nitrosococcus oceani ATCC 19707.</title>
        <authorList>
            <person name="Klotz M.G."/>
            <person name="Arp D.J."/>
            <person name="Chain P.S.G."/>
            <person name="El-Sheikh A.F."/>
            <person name="Hauser L.J."/>
            <person name="Hommes N.G."/>
            <person name="Larimer F.W."/>
            <person name="Malfatti S.A."/>
            <person name="Norton J.M."/>
            <person name="Poret-Peterson A.T."/>
            <person name="Vergez L.M."/>
            <person name="Ward B.B."/>
        </authorList>
    </citation>
    <scope>NUCLEOTIDE SEQUENCE [LARGE SCALE GENOMIC DNA]</scope>
    <source>
        <strain>ATCC 19707 / BCRC 17464 / JCM 30415 / NCIMB 11848 / C-107</strain>
    </source>
</reference>
<dbReference type="EC" id="2.1.2.9" evidence="1"/>
<dbReference type="EMBL" id="CP000127">
    <property type="protein sequence ID" value="ABA59457.1"/>
    <property type="molecule type" value="Genomic_DNA"/>
</dbReference>
<dbReference type="RefSeq" id="WP_002813377.1">
    <property type="nucleotide sequence ID" value="NC_007484.1"/>
</dbReference>
<dbReference type="SMR" id="Q3J6T9"/>
<dbReference type="FunCoup" id="Q3J6T9">
    <property type="interactions" value="516"/>
</dbReference>
<dbReference type="STRING" id="323261.Noc_3015"/>
<dbReference type="KEGG" id="noc:Noc_3015"/>
<dbReference type="eggNOG" id="COG0223">
    <property type="taxonomic scope" value="Bacteria"/>
</dbReference>
<dbReference type="HOGENOM" id="CLU_033347_1_2_6"/>
<dbReference type="InParanoid" id="Q3J6T9"/>
<dbReference type="Proteomes" id="UP000006838">
    <property type="component" value="Chromosome"/>
</dbReference>
<dbReference type="GO" id="GO:0005829">
    <property type="term" value="C:cytosol"/>
    <property type="evidence" value="ECO:0007669"/>
    <property type="project" value="TreeGrafter"/>
</dbReference>
<dbReference type="GO" id="GO:0004479">
    <property type="term" value="F:methionyl-tRNA formyltransferase activity"/>
    <property type="evidence" value="ECO:0007669"/>
    <property type="project" value="UniProtKB-UniRule"/>
</dbReference>
<dbReference type="CDD" id="cd08646">
    <property type="entry name" value="FMT_core_Met-tRNA-FMT_N"/>
    <property type="match status" value="1"/>
</dbReference>
<dbReference type="CDD" id="cd08704">
    <property type="entry name" value="Met_tRNA_FMT_C"/>
    <property type="match status" value="1"/>
</dbReference>
<dbReference type="Gene3D" id="3.10.25.10">
    <property type="entry name" value="Formyl transferase, C-terminal domain"/>
    <property type="match status" value="1"/>
</dbReference>
<dbReference type="Gene3D" id="3.40.50.170">
    <property type="entry name" value="Formyl transferase, N-terminal domain"/>
    <property type="match status" value="1"/>
</dbReference>
<dbReference type="HAMAP" id="MF_00182">
    <property type="entry name" value="Formyl_trans"/>
    <property type="match status" value="1"/>
</dbReference>
<dbReference type="InterPro" id="IPR005794">
    <property type="entry name" value="Fmt"/>
</dbReference>
<dbReference type="InterPro" id="IPR005793">
    <property type="entry name" value="Formyl_trans_C"/>
</dbReference>
<dbReference type="InterPro" id="IPR037022">
    <property type="entry name" value="Formyl_trans_C_sf"/>
</dbReference>
<dbReference type="InterPro" id="IPR002376">
    <property type="entry name" value="Formyl_transf_N"/>
</dbReference>
<dbReference type="InterPro" id="IPR036477">
    <property type="entry name" value="Formyl_transf_N_sf"/>
</dbReference>
<dbReference type="InterPro" id="IPR011034">
    <property type="entry name" value="Formyl_transferase-like_C_sf"/>
</dbReference>
<dbReference type="InterPro" id="IPR001555">
    <property type="entry name" value="GART_AS"/>
</dbReference>
<dbReference type="InterPro" id="IPR044135">
    <property type="entry name" value="Met-tRNA-FMT_C"/>
</dbReference>
<dbReference type="InterPro" id="IPR041711">
    <property type="entry name" value="Met-tRNA-FMT_N"/>
</dbReference>
<dbReference type="NCBIfam" id="TIGR00460">
    <property type="entry name" value="fmt"/>
    <property type="match status" value="1"/>
</dbReference>
<dbReference type="PANTHER" id="PTHR11138">
    <property type="entry name" value="METHIONYL-TRNA FORMYLTRANSFERASE"/>
    <property type="match status" value="1"/>
</dbReference>
<dbReference type="PANTHER" id="PTHR11138:SF5">
    <property type="entry name" value="METHIONYL-TRNA FORMYLTRANSFERASE, MITOCHONDRIAL"/>
    <property type="match status" value="1"/>
</dbReference>
<dbReference type="Pfam" id="PF02911">
    <property type="entry name" value="Formyl_trans_C"/>
    <property type="match status" value="1"/>
</dbReference>
<dbReference type="Pfam" id="PF00551">
    <property type="entry name" value="Formyl_trans_N"/>
    <property type="match status" value="1"/>
</dbReference>
<dbReference type="SUPFAM" id="SSF50486">
    <property type="entry name" value="FMT C-terminal domain-like"/>
    <property type="match status" value="1"/>
</dbReference>
<dbReference type="SUPFAM" id="SSF53328">
    <property type="entry name" value="Formyltransferase"/>
    <property type="match status" value="1"/>
</dbReference>
<dbReference type="PROSITE" id="PS00373">
    <property type="entry name" value="GART"/>
    <property type="match status" value="1"/>
</dbReference>